<comment type="function">
    <text evidence="1">One of the essential components for the initiation of protein synthesis. Stabilizes the binding of IF-2 and IF-3 on the 30S subunit to which N-formylmethionyl-tRNA(fMet) subsequently binds. Helps modulate mRNA selection, yielding the 30S pre-initiation complex (PIC). Upon addition of the 50S ribosomal subunit IF-1, IF-2 and IF-3 are released leaving the mature 70S translation initiation complex.</text>
</comment>
<comment type="subunit">
    <text evidence="1">Component of the 30S ribosomal translation pre-initiation complex which assembles on the 30S ribosome in the order IF-2 and IF-3, IF-1 and N-formylmethionyl-tRNA(fMet); mRNA recruitment can occur at any time during PIC assembly.</text>
</comment>
<comment type="subcellular location">
    <subcellularLocation>
        <location evidence="1">Cytoplasm</location>
    </subcellularLocation>
</comment>
<comment type="similarity">
    <text evidence="1">Belongs to the IF-1 family.</text>
</comment>
<name>IF13_ACISJ</name>
<feature type="chain" id="PRO_0000338749" description="Translation initiation factor IF-1 3">
    <location>
        <begin position="1"/>
        <end position="86"/>
    </location>
</feature>
<feature type="domain" description="S1-like" evidence="1">
    <location>
        <begin position="1"/>
        <end position="72"/>
    </location>
</feature>
<proteinExistence type="inferred from homology"/>
<evidence type="ECO:0000255" key="1">
    <source>
        <dbReference type="HAMAP-Rule" id="MF_00075"/>
    </source>
</evidence>
<reference key="1">
    <citation type="submission" date="2006-12" db="EMBL/GenBank/DDBJ databases">
        <title>Complete sequence of chromosome 1 of Acidovorax sp. JS42.</title>
        <authorList>
            <person name="Copeland A."/>
            <person name="Lucas S."/>
            <person name="Lapidus A."/>
            <person name="Barry K."/>
            <person name="Detter J.C."/>
            <person name="Glavina del Rio T."/>
            <person name="Dalin E."/>
            <person name="Tice H."/>
            <person name="Pitluck S."/>
            <person name="Chertkov O."/>
            <person name="Brettin T."/>
            <person name="Bruce D."/>
            <person name="Han C."/>
            <person name="Tapia R."/>
            <person name="Gilna P."/>
            <person name="Schmutz J."/>
            <person name="Larimer F."/>
            <person name="Land M."/>
            <person name="Hauser L."/>
            <person name="Kyrpides N."/>
            <person name="Kim E."/>
            <person name="Stahl D."/>
            <person name="Richardson P."/>
        </authorList>
    </citation>
    <scope>NUCLEOTIDE SEQUENCE [LARGE SCALE GENOMIC DNA]</scope>
    <source>
        <strain>JS42</strain>
    </source>
</reference>
<organism>
    <name type="scientific">Acidovorax sp. (strain JS42)</name>
    <dbReference type="NCBI Taxonomy" id="232721"/>
    <lineage>
        <taxon>Bacteria</taxon>
        <taxon>Pseudomonadati</taxon>
        <taxon>Pseudomonadota</taxon>
        <taxon>Betaproteobacteria</taxon>
        <taxon>Burkholderiales</taxon>
        <taxon>Comamonadaceae</taxon>
        <taxon>Acidovorax</taxon>
    </lineage>
</organism>
<gene>
    <name evidence="1" type="primary">infA3</name>
    <name type="ordered locus">Ajs_2961</name>
</gene>
<sequence>MAKEELIEMQGKVDEVLPDARYRVTLDNGHQLIAYTGGKMRKFRIRILAGDLVTLEMSPYDLNKGRVTFRHIENRTRTTPPARRRH</sequence>
<accession>A1WA22</accession>
<protein>
    <recommendedName>
        <fullName evidence="1">Translation initiation factor IF-1 3</fullName>
    </recommendedName>
</protein>
<dbReference type="EMBL" id="CP000539">
    <property type="protein sequence ID" value="ABM43097.1"/>
    <property type="molecule type" value="Genomic_DNA"/>
</dbReference>
<dbReference type="SMR" id="A1WA22"/>
<dbReference type="STRING" id="232721.Ajs_2961"/>
<dbReference type="KEGG" id="ajs:Ajs_2961"/>
<dbReference type="eggNOG" id="COG0361">
    <property type="taxonomic scope" value="Bacteria"/>
</dbReference>
<dbReference type="HOGENOM" id="CLU_151267_4_1_4"/>
<dbReference type="Proteomes" id="UP000000645">
    <property type="component" value="Chromosome"/>
</dbReference>
<dbReference type="GO" id="GO:0005829">
    <property type="term" value="C:cytosol"/>
    <property type="evidence" value="ECO:0007669"/>
    <property type="project" value="TreeGrafter"/>
</dbReference>
<dbReference type="GO" id="GO:0043022">
    <property type="term" value="F:ribosome binding"/>
    <property type="evidence" value="ECO:0007669"/>
    <property type="project" value="UniProtKB-UniRule"/>
</dbReference>
<dbReference type="GO" id="GO:0019843">
    <property type="term" value="F:rRNA binding"/>
    <property type="evidence" value="ECO:0007669"/>
    <property type="project" value="UniProtKB-UniRule"/>
</dbReference>
<dbReference type="GO" id="GO:0003743">
    <property type="term" value="F:translation initiation factor activity"/>
    <property type="evidence" value="ECO:0007669"/>
    <property type="project" value="UniProtKB-UniRule"/>
</dbReference>
<dbReference type="CDD" id="cd04451">
    <property type="entry name" value="S1_IF1"/>
    <property type="match status" value="1"/>
</dbReference>
<dbReference type="FunFam" id="2.40.50.140:FF:000002">
    <property type="entry name" value="Translation initiation factor IF-1"/>
    <property type="match status" value="1"/>
</dbReference>
<dbReference type="Gene3D" id="2.40.50.140">
    <property type="entry name" value="Nucleic acid-binding proteins"/>
    <property type="match status" value="1"/>
</dbReference>
<dbReference type="HAMAP" id="MF_00075">
    <property type="entry name" value="IF_1"/>
    <property type="match status" value="1"/>
</dbReference>
<dbReference type="InterPro" id="IPR012340">
    <property type="entry name" value="NA-bd_OB-fold"/>
</dbReference>
<dbReference type="InterPro" id="IPR006196">
    <property type="entry name" value="RNA-binding_domain_S1_IF1"/>
</dbReference>
<dbReference type="InterPro" id="IPR004368">
    <property type="entry name" value="TIF_IF1"/>
</dbReference>
<dbReference type="NCBIfam" id="TIGR00008">
    <property type="entry name" value="infA"/>
    <property type="match status" value="1"/>
</dbReference>
<dbReference type="PANTHER" id="PTHR33370">
    <property type="entry name" value="TRANSLATION INITIATION FACTOR IF-1, CHLOROPLASTIC"/>
    <property type="match status" value="1"/>
</dbReference>
<dbReference type="PANTHER" id="PTHR33370:SF1">
    <property type="entry name" value="TRANSLATION INITIATION FACTOR IF-1, CHLOROPLASTIC"/>
    <property type="match status" value="1"/>
</dbReference>
<dbReference type="Pfam" id="PF01176">
    <property type="entry name" value="eIF-1a"/>
    <property type="match status" value="1"/>
</dbReference>
<dbReference type="SUPFAM" id="SSF50249">
    <property type="entry name" value="Nucleic acid-binding proteins"/>
    <property type="match status" value="1"/>
</dbReference>
<dbReference type="PROSITE" id="PS50832">
    <property type="entry name" value="S1_IF1_TYPE"/>
    <property type="match status" value="1"/>
</dbReference>
<keyword id="KW-0963">Cytoplasm</keyword>
<keyword id="KW-0396">Initiation factor</keyword>
<keyword id="KW-0648">Protein biosynthesis</keyword>
<keyword id="KW-0694">RNA-binding</keyword>
<keyword id="KW-0699">rRNA-binding</keyword>